<feature type="transit peptide" description="Mitochondrion" evidence="2">
    <location>
        <begin position="1"/>
        <end position="40"/>
    </location>
</feature>
<feature type="chain" id="PRO_0000399534" description="Altered inheritance of mitochondria protein 23, mitochondrial">
    <location>
        <begin position="41"/>
        <end position="365"/>
    </location>
</feature>
<feature type="region of interest" description="Disordered" evidence="3">
    <location>
        <begin position="38"/>
        <end position="71"/>
    </location>
</feature>
<feature type="region of interest" description="Disordered" evidence="3">
    <location>
        <begin position="314"/>
        <end position="333"/>
    </location>
</feature>
<feature type="compositionally biased region" description="Basic and acidic residues" evidence="3">
    <location>
        <begin position="55"/>
        <end position="71"/>
    </location>
</feature>
<feature type="compositionally biased region" description="Basic and acidic residues" evidence="3">
    <location>
        <begin position="319"/>
        <end position="333"/>
    </location>
</feature>
<gene>
    <name type="primary">AIM23</name>
    <name type="ORF">CLUG_02750</name>
</gene>
<dbReference type="EMBL" id="CH408078">
    <property type="protein sequence ID" value="EEQ38624.1"/>
    <property type="molecule type" value="Genomic_DNA"/>
</dbReference>
<dbReference type="RefSeq" id="XP_002617306.1">
    <property type="nucleotide sequence ID" value="XM_002617260.1"/>
</dbReference>
<dbReference type="SMR" id="C4Y2I7"/>
<dbReference type="FunCoup" id="C4Y2I7">
    <property type="interactions" value="31"/>
</dbReference>
<dbReference type="GeneID" id="8497844"/>
<dbReference type="KEGG" id="clu:CLUG_02750"/>
<dbReference type="VEuPathDB" id="FungiDB:CLUG_02750"/>
<dbReference type="HOGENOM" id="CLU_054408_0_0_1"/>
<dbReference type="InParanoid" id="C4Y2I7"/>
<dbReference type="OMA" id="KVSWQIS"/>
<dbReference type="OrthoDB" id="26981at4891"/>
<dbReference type="Proteomes" id="UP000007703">
    <property type="component" value="Unassembled WGS sequence"/>
</dbReference>
<dbReference type="GO" id="GO:0005739">
    <property type="term" value="C:mitochondrion"/>
    <property type="evidence" value="ECO:0007669"/>
    <property type="project" value="UniProtKB-SubCell"/>
</dbReference>
<dbReference type="InterPro" id="IPR029427">
    <property type="entry name" value="AIM23"/>
</dbReference>
<dbReference type="Pfam" id="PF14877">
    <property type="entry name" value="mIF3"/>
    <property type="match status" value="1"/>
</dbReference>
<protein>
    <recommendedName>
        <fullName>Altered inheritance of mitochondria protein 23, mitochondrial</fullName>
    </recommendedName>
</protein>
<proteinExistence type="inferred from homology"/>
<keyword id="KW-0496">Mitochondrion</keyword>
<keyword id="KW-1185">Reference proteome</keyword>
<keyword id="KW-0809">Transit peptide</keyword>
<comment type="subcellular location">
    <subcellularLocation>
        <location evidence="1">Mitochondrion</location>
    </subcellularLocation>
</comment>
<comment type="similarity">
    <text evidence="4">Belongs to the AIM23 family.</text>
</comment>
<accession>C4Y2I7</accession>
<reference key="1">
    <citation type="journal article" date="2009" name="Nature">
        <title>Evolution of pathogenicity and sexual reproduction in eight Candida genomes.</title>
        <authorList>
            <person name="Butler G."/>
            <person name="Rasmussen M.D."/>
            <person name="Lin M.F."/>
            <person name="Santos M.A.S."/>
            <person name="Sakthikumar S."/>
            <person name="Munro C.A."/>
            <person name="Rheinbay E."/>
            <person name="Grabherr M."/>
            <person name="Forche A."/>
            <person name="Reedy J.L."/>
            <person name="Agrafioti I."/>
            <person name="Arnaud M.B."/>
            <person name="Bates S."/>
            <person name="Brown A.J.P."/>
            <person name="Brunke S."/>
            <person name="Costanzo M.C."/>
            <person name="Fitzpatrick D.A."/>
            <person name="de Groot P.W.J."/>
            <person name="Harris D."/>
            <person name="Hoyer L.L."/>
            <person name="Hube B."/>
            <person name="Klis F.M."/>
            <person name="Kodira C."/>
            <person name="Lennard N."/>
            <person name="Logue M.E."/>
            <person name="Martin R."/>
            <person name="Neiman A.M."/>
            <person name="Nikolaou E."/>
            <person name="Quail M.A."/>
            <person name="Quinn J."/>
            <person name="Santos M.C."/>
            <person name="Schmitzberger F.F."/>
            <person name="Sherlock G."/>
            <person name="Shah P."/>
            <person name="Silverstein K.A.T."/>
            <person name="Skrzypek M.S."/>
            <person name="Soll D."/>
            <person name="Staggs R."/>
            <person name="Stansfield I."/>
            <person name="Stumpf M.P.H."/>
            <person name="Sudbery P.E."/>
            <person name="Srikantha T."/>
            <person name="Zeng Q."/>
            <person name="Berman J."/>
            <person name="Berriman M."/>
            <person name="Heitman J."/>
            <person name="Gow N.A.R."/>
            <person name="Lorenz M.C."/>
            <person name="Birren B.W."/>
            <person name="Kellis M."/>
            <person name="Cuomo C.A."/>
        </authorList>
    </citation>
    <scope>NUCLEOTIDE SEQUENCE [LARGE SCALE GENOMIC DNA]</scope>
    <source>
        <strain>ATCC 42720</strain>
    </source>
</reference>
<evidence type="ECO:0000250" key="1"/>
<evidence type="ECO:0000255" key="2"/>
<evidence type="ECO:0000256" key="3">
    <source>
        <dbReference type="SAM" id="MobiDB-lite"/>
    </source>
</evidence>
<evidence type="ECO:0000305" key="4"/>
<sequence>MFRRALPAARNFGSQLRTTRTFSLSGALLAETKSSKTNRFASKYKKSSSGNKNGPRHDNAPKKFRQGDTRTKTIRFNFDSGSEKAKEALKDLIKRVHGYSPNYQVQFVDPQTNKLRKMHLVELVNSTDLDKDGLLMVGPSSAQEMPLVRTIRVQDMIKEYSDRLALAKEKELLASGSVIAQRVINKRMQAEKKKSATKMLALSWSISVSDLMHQKKNEILKRVDNNEKFIIFVGEKESLYSARNSVEKEDGIASQLGTSRTKWDRMDEDELAMEMKKREMIFGKLEELLAECECKYDVSGSLDARMMLNVTPKPNVSKASEKETEVSARELKRQRMLAKSREAAKAKKKIDEEDLDSLYSIKIIE</sequence>
<organism>
    <name type="scientific">Clavispora lusitaniae (strain ATCC 42720)</name>
    <name type="common">Yeast</name>
    <name type="synonym">Candida lusitaniae</name>
    <dbReference type="NCBI Taxonomy" id="306902"/>
    <lineage>
        <taxon>Eukaryota</taxon>
        <taxon>Fungi</taxon>
        <taxon>Dikarya</taxon>
        <taxon>Ascomycota</taxon>
        <taxon>Saccharomycotina</taxon>
        <taxon>Pichiomycetes</taxon>
        <taxon>Metschnikowiaceae</taxon>
        <taxon>Clavispora</taxon>
    </lineage>
</organism>
<name>AIM23_CLAL4</name>